<protein>
    <recommendedName>
        <fullName evidence="1">Tryptophan 2,3-dioxygenase</fullName>
        <shortName evidence="1">TDO</shortName>
        <ecNumber evidence="1">1.13.11.11</ecNumber>
    </recommendedName>
    <alternativeName>
        <fullName evidence="1">Tryptamin 2,3-dioxygenase</fullName>
    </alternativeName>
    <alternativeName>
        <fullName evidence="1">Tryptophan oxygenase</fullName>
        <shortName evidence="1">TO</shortName>
        <shortName evidence="1">TRPO</shortName>
    </alternativeName>
    <alternativeName>
        <fullName evidence="1">Tryptophan pyrrolase</fullName>
    </alternativeName>
    <alternativeName>
        <fullName evidence="1">Tryptophanase</fullName>
    </alternativeName>
</protein>
<name>T23O_BURP0</name>
<dbReference type="EC" id="1.13.11.11" evidence="1"/>
<dbReference type="EMBL" id="CP000572">
    <property type="protein sequence ID" value="ABN89254.1"/>
    <property type="status" value="ALT_INIT"/>
    <property type="molecule type" value="Genomic_DNA"/>
</dbReference>
<dbReference type="RefSeq" id="WP_004530854.1">
    <property type="nucleotide sequence ID" value="NC_009076.1"/>
</dbReference>
<dbReference type="SMR" id="A3NS55"/>
<dbReference type="GeneID" id="93059352"/>
<dbReference type="KEGG" id="bpl:BURPS1106A_0895"/>
<dbReference type="HOGENOM" id="CLU_063240_0_0_4"/>
<dbReference type="UniPathway" id="UPA00333">
    <property type="reaction ID" value="UER00453"/>
</dbReference>
<dbReference type="Proteomes" id="UP000006738">
    <property type="component" value="Chromosome I"/>
</dbReference>
<dbReference type="GO" id="GO:0020037">
    <property type="term" value="F:heme binding"/>
    <property type="evidence" value="ECO:0000250"/>
    <property type="project" value="UniProtKB"/>
</dbReference>
<dbReference type="GO" id="GO:0046872">
    <property type="term" value="F:metal ion binding"/>
    <property type="evidence" value="ECO:0007669"/>
    <property type="project" value="UniProtKB-KW"/>
</dbReference>
<dbReference type="GO" id="GO:0004833">
    <property type="term" value="F:tryptophan 2,3-dioxygenase activity"/>
    <property type="evidence" value="ECO:0000250"/>
    <property type="project" value="UniProtKB"/>
</dbReference>
<dbReference type="GO" id="GO:0019442">
    <property type="term" value="P:L-tryptophan catabolic process to acetyl-CoA"/>
    <property type="evidence" value="ECO:0007669"/>
    <property type="project" value="TreeGrafter"/>
</dbReference>
<dbReference type="GO" id="GO:0019441">
    <property type="term" value="P:L-tryptophan catabolic process to kynurenine"/>
    <property type="evidence" value="ECO:0000250"/>
    <property type="project" value="UniProtKB"/>
</dbReference>
<dbReference type="FunFam" id="1.20.58.480:FF:000001">
    <property type="entry name" value="Tryptophan 2,3-dioxygenase"/>
    <property type="match status" value="1"/>
</dbReference>
<dbReference type="Gene3D" id="1.20.58.480">
    <property type="match status" value="1"/>
</dbReference>
<dbReference type="HAMAP" id="MF_01972">
    <property type="entry name" value="T23O"/>
    <property type="match status" value="1"/>
</dbReference>
<dbReference type="InterPro" id="IPR037217">
    <property type="entry name" value="Trp/Indoleamine_2_3_dOase-like"/>
</dbReference>
<dbReference type="InterPro" id="IPR017485">
    <property type="entry name" value="Trp_2-3-dOase_bac"/>
</dbReference>
<dbReference type="InterPro" id="IPR004981">
    <property type="entry name" value="Trp_2_3_dOase"/>
</dbReference>
<dbReference type="NCBIfam" id="TIGR03036">
    <property type="entry name" value="trp_2_3_diox"/>
    <property type="match status" value="1"/>
</dbReference>
<dbReference type="PANTHER" id="PTHR10138">
    <property type="entry name" value="TRYPTOPHAN 2,3-DIOXYGENASE"/>
    <property type="match status" value="1"/>
</dbReference>
<dbReference type="PANTHER" id="PTHR10138:SF0">
    <property type="entry name" value="TRYPTOPHAN 2,3-DIOXYGENASE"/>
    <property type="match status" value="1"/>
</dbReference>
<dbReference type="Pfam" id="PF03301">
    <property type="entry name" value="Trp_dioxygenase"/>
    <property type="match status" value="1"/>
</dbReference>
<dbReference type="SUPFAM" id="SSF140959">
    <property type="entry name" value="Indolic compounds 2,3-dioxygenase-like"/>
    <property type="match status" value="1"/>
</dbReference>
<comment type="function">
    <text evidence="1">Heme-dependent dioxygenase that catalyzes the oxidative cleavage of the L-tryptophan (L-Trp) pyrrole ring and converts L-tryptophan to N-formyl-L-kynurenine. Catalyzes the oxidative cleavage of the indole moiety.</text>
</comment>
<comment type="catalytic activity">
    <reaction evidence="1">
        <text>L-tryptophan + O2 = N-formyl-L-kynurenine</text>
        <dbReference type="Rhea" id="RHEA:24536"/>
        <dbReference type="ChEBI" id="CHEBI:15379"/>
        <dbReference type="ChEBI" id="CHEBI:57912"/>
        <dbReference type="ChEBI" id="CHEBI:58629"/>
        <dbReference type="EC" id="1.13.11.11"/>
    </reaction>
</comment>
<comment type="cofactor">
    <cofactor evidence="1">
        <name>heme</name>
        <dbReference type="ChEBI" id="CHEBI:30413"/>
    </cofactor>
    <text evidence="1">Binds 1 heme group per subunit.</text>
</comment>
<comment type="pathway">
    <text evidence="1">Amino-acid degradation; L-tryptophan degradation via kynurenine pathway; L-kynurenine from L-tryptophan: step 1/2.</text>
</comment>
<comment type="subunit">
    <text evidence="1">Homotetramer.</text>
</comment>
<comment type="similarity">
    <text evidence="1">Belongs to the tryptophan 2,3-dioxygenase family.</text>
</comment>
<comment type="sequence caution" evidence="3">
    <conflict type="erroneous initiation">
        <sequence resource="EMBL-CDS" id="ABN89254"/>
    </conflict>
</comment>
<sequence>MQPPGDDAAPRCPFAGAHAPDAPHVPEAAGDDAQAGWHRAQLDFSQSMSYGDYLSLDPILDAQHPRSPDHNEMLFIIQHQTSELWMKLALYELRAALASIRDDALPPAFKMLARVSRVLEQLVQAWNVLATMTPSEYSAMRPYLGASSGFQSYQYRELEFILGNKNAQMLRPHAHRPAIHAHLEASLQAPSLYDEVIRLLARRGFPIAPERLDADWTQPTRHDRTVEAAWLAVYREPNAHWELYEMAEELVDLEDAFRQWRFRHVTTVERIIGFKQGTGGTSGAPYLRKMLDVVLFPELWHVRTTL</sequence>
<evidence type="ECO:0000255" key="1">
    <source>
        <dbReference type="HAMAP-Rule" id="MF_01972"/>
    </source>
</evidence>
<evidence type="ECO:0000256" key="2">
    <source>
        <dbReference type="SAM" id="MobiDB-lite"/>
    </source>
</evidence>
<evidence type="ECO:0000305" key="3"/>
<organism>
    <name type="scientific">Burkholderia pseudomallei (strain 1106a)</name>
    <dbReference type="NCBI Taxonomy" id="357348"/>
    <lineage>
        <taxon>Bacteria</taxon>
        <taxon>Pseudomonadati</taxon>
        <taxon>Pseudomonadota</taxon>
        <taxon>Betaproteobacteria</taxon>
        <taxon>Burkholderiales</taxon>
        <taxon>Burkholderiaceae</taxon>
        <taxon>Burkholderia</taxon>
        <taxon>pseudomallei group</taxon>
    </lineage>
</organism>
<keyword id="KW-0223">Dioxygenase</keyword>
<keyword id="KW-0349">Heme</keyword>
<keyword id="KW-0408">Iron</keyword>
<keyword id="KW-0479">Metal-binding</keyword>
<keyword id="KW-0560">Oxidoreductase</keyword>
<keyword id="KW-0823">Tryptophan catabolism</keyword>
<reference key="1">
    <citation type="journal article" date="2010" name="Genome Biol. Evol.">
        <title>Continuing evolution of Burkholderia mallei through genome reduction and large-scale rearrangements.</title>
        <authorList>
            <person name="Losada L."/>
            <person name="Ronning C.M."/>
            <person name="DeShazer D."/>
            <person name="Woods D."/>
            <person name="Fedorova N."/>
            <person name="Kim H.S."/>
            <person name="Shabalina S.A."/>
            <person name="Pearson T.R."/>
            <person name="Brinkac L."/>
            <person name="Tan P."/>
            <person name="Nandi T."/>
            <person name="Crabtree J."/>
            <person name="Badger J."/>
            <person name="Beckstrom-Sternberg S."/>
            <person name="Saqib M."/>
            <person name="Schutzer S.E."/>
            <person name="Keim P."/>
            <person name="Nierman W.C."/>
        </authorList>
    </citation>
    <scope>NUCLEOTIDE SEQUENCE [LARGE SCALE GENOMIC DNA]</scope>
    <source>
        <strain>1106a</strain>
    </source>
</reference>
<gene>
    <name evidence="1" type="primary">kynA</name>
    <name type="ordered locus">BURPS1106A_0895</name>
</gene>
<proteinExistence type="inferred from homology"/>
<accession>A3NS55</accession>
<feature type="chain" id="PRO_0000360107" description="Tryptophan 2,3-dioxygenase">
    <location>
        <begin position="1"/>
        <end position="306"/>
    </location>
</feature>
<feature type="region of interest" description="Disordered" evidence="2">
    <location>
        <begin position="1"/>
        <end position="33"/>
    </location>
</feature>
<feature type="binding site" evidence="1">
    <location>
        <begin position="75"/>
        <end position="79"/>
    </location>
    <ligand>
        <name>substrate</name>
    </ligand>
</feature>
<feature type="binding site" evidence="1">
    <location>
        <position position="137"/>
    </location>
    <ligand>
        <name>substrate</name>
    </ligand>
</feature>
<feature type="binding site" evidence="1">
    <location>
        <position position="141"/>
    </location>
    <ligand>
        <name>substrate</name>
    </ligand>
</feature>
<feature type="binding site" description="axial binding residue" evidence="1">
    <location>
        <position position="264"/>
    </location>
    <ligand>
        <name>heme</name>
        <dbReference type="ChEBI" id="CHEBI:30413"/>
    </ligand>
    <ligandPart>
        <name>Fe</name>
        <dbReference type="ChEBI" id="CHEBI:18248"/>
    </ligandPart>
</feature>
<feature type="binding site" evidence="1">
    <location>
        <position position="278"/>
    </location>
    <ligand>
        <name>substrate</name>
    </ligand>
</feature>